<dbReference type="EMBL" id="BC079371">
    <property type="protein sequence ID" value="AAH79371.1"/>
    <property type="molecule type" value="mRNA"/>
</dbReference>
<dbReference type="RefSeq" id="NP_001012082.1">
    <property type="nucleotide sequence ID" value="NM_001012082.1"/>
</dbReference>
<dbReference type="SMR" id="Q6AXR5"/>
<dbReference type="FunCoup" id="Q6AXR5">
    <property type="interactions" value="2748"/>
</dbReference>
<dbReference type="STRING" id="10116.ENSRNOP00000074264"/>
<dbReference type="PhosphoSitePlus" id="Q6AXR5"/>
<dbReference type="PaxDb" id="10116-ENSRNOP00000021676"/>
<dbReference type="Ensembl" id="ENSRNOT00000085122.2">
    <property type="protein sequence ID" value="ENSRNOP00000074264.1"/>
    <property type="gene ID" value="ENSRNOG00000015502.8"/>
</dbReference>
<dbReference type="GeneID" id="310808"/>
<dbReference type="KEGG" id="rno:310808"/>
<dbReference type="UCSC" id="RGD:1308615">
    <property type="organism name" value="rat"/>
</dbReference>
<dbReference type="AGR" id="RGD:1308615"/>
<dbReference type="CTD" id="23443"/>
<dbReference type="RGD" id="1308615">
    <property type="gene designation" value="Slc35a3"/>
</dbReference>
<dbReference type="eggNOG" id="KOG2234">
    <property type="taxonomic scope" value="Eukaryota"/>
</dbReference>
<dbReference type="GeneTree" id="ENSGT00940000157395"/>
<dbReference type="HOGENOM" id="CLU_024645_1_0_1"/>
<dbReference type="InParanoid" id="Q6AXR5"/>
<dbReference type="OMA" id="AIMYVIQ"/>
<dbReference type="OrthoDB" id="408493at2759"/>
<dbReference type="PhylomeDB" id="Q6AXR5"/>
<dbReference type="TreeFam" id="TF315345"/>
<dbReference type="Reactome" id="R-RNO-727802">
    <property type="pathway name" value="Transport of nucleotide sugars"/>
</dbReference>
<dbReference type="PRO" id="PR:Q6AXR5"/>
<dbReference type="Proteomes" id="UP000002494">
    <property type="component" value="Chromosome 2"/>
</dbReference>
<dbReference type="Bgee" id="ENSRNOG00000061832">
    <property type="expression patterns" value="Expressed in stomach and 18 other cell types or tissues"/>
</dbReference>
<dbReference type="GO" id="GO:0005794">
    <property type="term" value="C:Golgi apparatus"/>
    <property type="evidence" value="ECO:0000266"/>
    <property type="project" value="RGD"/>
</dbReference>
<dbReference type="GO" id="GO:0000139">
    <property type="term" value="C:Golgi membrane"/>
    <property type="evidence" value="ECO:0000250"/>
    <property type="project" value="UniProtKB"/>
</dbReference>
<dbReference type="GO" id="GO:0015297">
    <property type="term" value="F:antiporter activity"/>
    <property type="evidence" value="ECO:0007669"/>
    <property type="project" value="UniProtKB-KW"/>
</dbReference>
<dbReference type="GO" id="GO:0005459">
    <property type="term" value="F:UDP-galactose transmembrane transporter activity"/>
    <property type="evidence" value="ECO:0000266"/>
    <property type="project" value="RGD"/>
</dbReference>
<dbReference type="GO" id="GO:0055085">
    <property type="term" value="P:transmembrane transport"/>
    <property type="evidence" value="ECO:0000318"/>
    <property type="project" value="GO_Central"/>
</dbReference>
<dbReference type="GO" id="GO:1990569">
    <property type="term" value="P:UDP-N-acetylglucosamine transmembrane transport"/>
    <property type="evidence" value="ECO:0000250"/>
    <property type="project" value="UniProtKB"/>
</dbReference>
<dbReference type="InterPro" id="IPR007271">
    <property type="entry name" value="Nuc_sug_transpt"/>
</dbReference>
<dbReference type="NCBIfam" id="TIGR00803">
    <property type="entry name" value="nst"/>
    <property type="match status" value="1"/>
</dbReference>
<dbReference type="PANTHER" id="PTHR10231">
    <property type="entry name" value="NUCLEOTIDE-SUGAR TRANSMEMBRANE TRANSPORTER"/>
    <property type="match status" value="1"/>
</dbReference>
<dbReference type="Pfam" id="PF04142">
    <property type="entry name" value="Nuc_sug_transp"/>
    <property type="match status" value="1"/>
</dbReference>
<dbReference type="PIRSF" id="PIRSF005799">
    <property type="entry name" value="UDP-gal_transpt"/>
    <property type="match status" value="1"/>
</dbReference>
<dbReference type="SUPFAM" id="SSF103481">
    <property type="entry name" value="Multidrug resistance efflux transporter EmrE"/>
    <property type="match status" value="1"/>
</dbReference>
<accession>Q6AXR5</accession>
<sequence>MSANLKYLSLGILVFQTTSLVLTMRYSRTLKEEGPRYLSSTAVVVAEFLKIMACIFLVYKDSKCSVRTLNRVLHDEILNKPMETLKLAIPSGIYTLQNNLLYVALSNLDAATYQVTYQLKILTTALFSVSMLGKKLGMYQWLSLVILMAGVAFVQWPSDSQELNSKDLSTGSQFVGLMAVLIACFSSGFAGVYFEKILKETKQSVWIRNIQLGFFGSIFGLMGVYVYDGELVSKNGFFQGYNQLTWIVVVLQALGGLVIAAVIKYADNILKGFATSLSIILSTIISYFWLQDFVPTSVFFLGAILVIAATFLYGYDPKPAGNPTKA</sequence>
<gene>
    <name type="primary">Slc35a3</name>
</gene>
<protein>
    <recommendedName>
        <fullName>UDP-N-acetylglucosamine transporter</fullName>
    </recommendedName>
    <alternativeName>
        <fullName>Golgi UDP-GlcNAc transporter</fullName>
    </alternativeName>
    <alternativeName>
        <fullName>Solute carrier family 35 member A3</fullName>
    </alternativeName>
</protein>
<evidence type="ECO:0000250" key="1">
    <source>
        <dbReference type="UniProtKB" id="Q9Y2D2"/>
    </source>
</evidence>
<evidence type="ECO:0000255" key="2"/>
<evidence type="ECO:0000305" key="3"/>
<feature type="chain" id="PRO_0000213359" description="UDP-N-acetylglucosamine transporter">
    <location>
        <begin position="1"/>
        <end position="326"/>
    </location>
</feature>
<feature type="transmembrane region" description="Helical" evidence="2">
    <location>
        <begin position="4"/>
        <end position="24"/>
    </location>
</feature>
<feature type="transmembrane region" description="Helical" evidence="2">
    <location>
        <begin position="38"/>
        <end position="58"/>
    </location>
</feature>
<feature type="transmembrane region" description="Helical" evidence="2">
    <location>
        <begin position="136"/>
        <end position="156"/>
    </location>
</feature>
<feature type="transmembrane region" description="Helical" evidence="2">
    <location>
        <begin position="174"/>
        <end position="194"/>
    </location>
</feature>
<feature type="transmembrane region" description="Helical" evidence="2">
    <location>
        <begin position="212"/>
        <end position="232"/>
    </location>
</feature>
<feature type="transmembrane region" description="Helical" evidence="2">
    <location>
        <begin position="243"/>
        <end position="263"/>
    </location>
</feature>
<feature type="transmembrane region" description="Helical" evidence="2">
    <location>
        <begin position="269"/>
        <end position="289"/>
    </location>
</feature>
<feature type="transmembrane region" description="Helical" evidence="2">
    <location>
        <begin position="293"/>
        <end position="313"/>
    </location>
</feature>
<name>S35A3_RAT</name>
<proteinExistence type="evidence at transcript level"/>
<keyword id="KW-0050">Antiport</keyword>
<keyword id="KW-0333">Golgi apparatus</keyword>
<keyword id="KW-0472">Membrane</keyword>
<keyword id="KW-1185">Reference proteome</keyword>
<keyword id="KW-0762">Sugar transport</keyword>
<keyword id="KW-0812">Transmembrane</keyword>
<keyword id="KW-1133">Transmembrane helix</keyword>
<keyword id="KW-0813">Transport</keyword>
<comment type="function">
    <text evidence="1">Transports diphosphate-N-acetylglucosamine (UDP-GlcNAc) from the cytosol into the lumen of the Golgi apparatus, functioning as an antiporter that exchanges UDP-N-acetyl-alpha-D-glucosamine for UMP. May supply UDP-GlcNAc as substrate for Golgi-resident glycosyltransferases that generate highly branched, multiantennary complex N-glycans and keratan sulfate. However, the exact role of SLC35A3 still needs to be elucidated, it could be a member of a catalytically more efficient multiprotein complex rather than function independently as a single transporter.</text>
</comment>
<comment type="catalytic activity">
    <reaction evidence="1">
        <text>UMP(out) + UDP-N-acetyl-alpha-D-glucosamine(in) = UMP(in) + UDP-N-acetyl-alpha-D-glucosamine(out)</text>
        <dbReference type="Rhea" id="RHEA:72695"/>
        <dbReference type="ChEBI" id="CHEBI:57705"/>
        <dbReference type="ChEBI" id="CHEBI:57865"/>
    </reaction>
</comment>
<comment type="subunit">
    <text evidence="1">Interacts with SLC35A2; the interaction is reduced in the presence of SLC35A4. Found in a complex with SLC35A2 and SLC35A4. Interacts with MGAT4B.</text>
</comment>
<comment type="subcellular location">
    <subcellularLocation>
        <location evidence="1">Golgi apparatus membrane</location>
        <topology evidence="2">Multi-pass membrane protein</topology>
    </subcellularLocation>
</comment>
<comment type="PTM">
    <text evidence="1">O-Glcnacylation regulates the stability of SLC35A3 and the specific complex formation with MGAT4B.</text>
</comment>
<comment type="similarity">
    <text evidence="3">Belongs to the nucleotide-sugar transporter family. SLC35A subfamily.</text>
</comment>
<reference key="1">
    <citation type="journal article" date="2004" name="Genome Res.">
        <title>The status, quality, and expansion of the NIH full-length cDNA project: the Mammalian Gene Collection (MGC).</title>
        <authorList>
            <consortium name="The MGC Project Team"/>
        </authorList>
    </citation>
    <scope>NUCLEOTIDE SEQUENCE [LARGE SCALE MRNA]</scope>
    <source>
        <tissue>Kidney</tissue>
    </source>
</reference>
<organism>
    <name type="scientific">Rattus norvegicus</name>
    <name type="common">Rat</name>
    <dbReference type="NCBI Taxonomy" id="10116"/>
    <lineage>
        <taxon>Eukaryota</taxon>
        <taxon>Metazoa</taxon>
        <taxon>Chordata</taxon>
        <taxon>Craniata</taxon>
        <taxon>Vertebrata</taxon>
        <taxon>Euteleostomi</taxon>
        <taxon>Mammalia</taxon>
        <taxon>Eutheria</taxon>
        <taxon>Euarchontoglires</taxon>
        <taxon>Glires</taxon>
        <taxon>Rodentia</taxon>
        <taxon>Myomorpha</taxon>
        <taxon>Muroidea</taxon>
        <taxon>Muridae</taxon>
        <taxon>Murinae</taxon>
        <taxon>Rattus</taxon>
    </lineage>
</organism>